<proteinExistence type="inferred from homology"/>
<dbReference type="EC" id="3.4.25.2" evidence="1"/>
<dbReference type="EMBL" id="CP000390">
    <property type="protein sequence ID" value="ABG64863.1"/>
    <property type="molecule type" value="Genomic_DNA"/>
</dbReference>
<dbReference type="SMR" id="Q11CL2"/>
<dbReference type="STRING" id="266779.Meso_3492"/>
<dbReference type="MEROPS" id="T01.006"/>
<dbReference type="KEGG" id="mes:Meso_3492"/>
<dbReference type="eggNOG" id="COG5405">
    <property type="taxonomic scope" value="Bacteria"/>
</dbReference>
<dbReference type="HOGENOM" id="CLU_093872_1_0_5"/>
<dbReference type="OrthoDB" id="9804884at2"/>
<dbReference type="GO" id="GO:0009376">
    <property type="term" value="C:HslUV protease complex"/>
    <property type="evidence" value="ECO:0007669"/>
    <property type="project" value="UniProtKB-UniRule"/>
</dbReference>
<dbReference type="GO" id="GO:0005839">
    <property type="term" value="C:proteasome core complex"/>
    <property type="evidence" value="ECO:0007669"/>
    <property type="project" value="InterPro"/>
</dbReference>
<dbReference type="GO" id="GO:0046872">
    <property type="term" value="F:metal ion binding"/>
    <property type="evidence" value="ECO:0007669"/>
    <property type="project" value="UniProtKB-KW"/>
</dbReference>
<dbReference type="GO" id="GO:0004298">
    <property type="term" value="F:threonine-type endopeptidase activity"/>
    <property type="evidence" value="ECO:0007669"/>
    <property type="project" value="UniProtKB-KW"/>
</dbReference>
<dbReference type="GO" id="GO:0051603">
    <property type="term" value="P:proteolysis involved in protein catabolic process"/>
    <property type="evidence" value="ECO:0007669"/>
    <property type="project" value="InterPro"/>
</dbReference>
<dbReference type="CDD" id="cd01913">
    <property type="entry name" value="protease_HslV"/>
    <property type="match status" value="1"/>
</dbReference>
<dbReference type="FunFam" id="3.60.20.10:FF:000002">
    <property type="entry name" value="ATP-dependent protease subunit HslV"/>
    <property type="match status" value="1"/>
</dbReference>
<dbReference type="Gene3D" id="3.60.20.10">
    <property type="entry name" value="Glutamine Phosphoribosylpyrophosphate, subunit 1, domain 1"/>
    <property type="match status" value="1"/>
</dbReference>
<dbReference type="HAMAP" id="MF_00248">
    <property type="entry name" value="HslV"/>
    <property type="match status" value="1"/>
</dbReference>
<dbReference type="InterPro" id="IPR022281">
    <property type="entry name" value="ATP-dep_Prtase_HsIV_su"/>
</dbReference>
<dbReference type="InterPro" id="IPR029055">
    <property type="entry name" value="Ntn_hydrolases_N"/>
</dbReference>
<dbReference type="InterPro" id="IPR001353">
    <property type="entry name" value="Proteasome_sua/b"/>
</dbReference>
<dbReference type="InterPro" id="IPR023333">
    <property type="entry name" value="Proteasome_suB-type"/>
</dbReference>
<dbReference type="NCBIfam" id="TIGR03692">
    <property type="entry name" value="ATP_dep_HslV"/>
    <property type="match status" value="1"/>
</dbReference>
<dbReference type="NCBIfam" id="NF003964">
    <property type="entry name" value="PRK05456.1"/>
    <property type="match status" value="1"/>
</dbReference>
<dbReference type="PANTHER" id="PTHR32194:SF7">
    <property type="entry name" value="ATP-DEPENDENT PROTEASE SUBUNIT HSLV"/>
    <property type="match status" value="1"/>
</dbReference>
<dbReference type="PANTHER" id="PTHR32194">
    <property type="entry name" value="METALLOPROTEASE TLDD"/>
    <property type="match status" value="1"/>
</dbReference>
<dbReference type="Pfam" id="PF00227">
    <property type="entry name" value="Proteasome"/>
    <property type="match status" value="1"/>
</dbReference>
<dbReference type="PIRSF" id="PIRSF039093">
    <property type="entry name" value="HslV"/>
    <property type="match status" value="1"/>
</dbReference>
<dbReference type="SUPFAM" id="SSF56235">
    <property type="entry name" value="N-terminal nucleophile aminohydrolases (Ntn hydrolases)"/>
    <property type="match status" value="1"/>
</dbReference>
<dbReference type="PROSITE" id="PS51476">
    <property type="entry name" value="PROTEASOME_BETA_2"/>
    <property type="match status" value="1"/>
</dbReference>
<feature type="chain" id="PRO_0000336779" description="ATP-dependent protease subunit HslV">
    <location>
        <begin position="1"/>
        <end position="182"/>
    </location>
</feature>
<feature type="active site" evidence="1">
    <location>
        <position position="10"/>
    </location>
</feature>
<feature type="binding site" evidence="1">
    <location>
        <position position="164"/>
    </location>
    <ligand>
        <name>Na(+)</name>
        <dbReference type="ChEBI" id="CHEBI:29101"/>
    </ligand>
</feature>
<feature type="binding site" evidence="1">
    <location>
        <position position="167"/>
    </location>
    <ligand>
        <name>Na(+)</name>
        <dbReference type="ChEBI" id="CHEBI:29101"/>
    </ligand>
</feature>
<feature type="binding site" evidence="1">
    <location>
        <position position="170"/>
    </location>
    <ligand>
        <name>Na(+)</name>
        <dbReference type="ChEBI" id="CHEBI:29101"/>
    </ligand>
</feature>
<organism>
    <name type="scientific">Chelativorans sp. (strain BNC1)</name>
    <dbReference type="NCBI Taxonomy" id="266779"/>
    <lineage>
        <taxon>Bacteria</taxon>
        <taxon>Pseudomonadati</taxon>
        <taxon>Pseudomonadota</taxon>
        <taxon>Alphaproteobacteria</taxon>
        <taxon>Hyphomicrobiales</taxon>
        <taxon>Phyllobacteriaceae</taxon>
        <taxon>Chelativorans</taxon>
    </lineage>
</organism>
<comment type="function">
    <text evidence="1">Protease subunit of a proteasome-like degradation complex believed to be a general protein degrading machinery.</text>
</comment>
<comment type="catalytic activity">
    <reaction evidence="1">
        <text>ATP-dependent cleavage of peptide bonds with broad specificity.</text>
        <dbReference type="EC" id="3.4.25.2"/>
    </reaction>
</comment>
<comment type="activity regulation">
    <text evidence="1">Allosterically activated by HslU binding.</text>
</comment>
<comment type="subunit">
    <text evidence="1">A double ring-shaped homohexamer of HslV is capped on each side by a ring-shaped HslU homohexamer. The assembly of the HslU/HslV complex is dependent on binding of ATP.</text>
</comment>
<comment type="subcellular location">
    <subcellularLocation>
        <location evidence="1">Cytoplasm</location>
    </subcellularLocation>
</comment>
<comment type="similarity">
    <text evidence="1">Belongs to the peptidase T1B family. HslV subfamily.</text>
</comment>
<name>HSLV_CHESB</name>
<keyword id="KW-0021">Allosteric enzyme</keyword>
<keyword id="KW-0963">Cytoplasm</keyword>
<keyword id="KW-0378">Hydrolase</keyword>
<keyword id="KW-0479">Metal-binding</keyword>
<keyword id="KW-0645">Protease</keyword>
<keyword id="KW-0915">Sodium</keyword>
<keyword id="KW-0888">Threonine protease</keyword>
<sequence length="182" mass="19459">MSDNLTMHGTTIVTVRKGGKVVIAGDGQVSLGQTVMKGNARKVRRIGKGNVIAGFAGATADAFTLLERLEKKLEQYPDQLMRASVELAKDWRTDRYLRRLEAMMLVADKNVTLALTGTGDVLEPEEGVMAIGSGGNYALAAARALIDTDKSAEEIARKAMEIAASICVYTNSNIIVETLDAG</sequence>
<protein>
    <recommendedName>
        <fullName evidence="1">ATP-dependent protease subunit HslV</fullName>
        <ecNumber evidence="1">3.4.25.2</ecNumber>
    </recommendedName>
</protein>
<gene>
    <name evidence="1" type="primary">hslV</name>
    <name type="ordered locus">Meso_3492</name>
</gene>
<accession>Q11CL2</accession>
<evidence type="ECO:0000255" key="1">
    <source>
        <dbReference type="HAMAP-Rule" id="MF_00248"/>
    </source>
</evidence>
<reference key="1">
    <citation type="submission" date="2006-06" db="EMBL/GenBank/DDBJ databases">
        <title>Complete sequence of chromosome of Mesorhizobium sp. BNC1.</title>
        <authorList>
            <consortium name="US DOE Joint Genome Institute"/>
            <person name="Copeland A."/>
            <person name="Lucas S."/>
            <person name="Lapidus A."/>
            <person name="Barry K."/>
            <person name="Detter J.C."/>
            <person name="Glavina del Rio T."/>
            <person name="Hammon N."/>
            <person name="Israni S."/>
            <person name="Dalin E."/>
            <person name="Tice H."/>
            <person name="Pitluck S."/>
            <person name="Chertkov O."/>
            <person name="Brettin T."/>
            <person name="Bruce D."/>
            <person name="Han C."/>
            <person name="Tapia R."/>
            <person name="Gilna P."/>
            <person name="Schmutz J."/>
            <person name="Larimer F."/>
            <person name="Land M."/>
            <person name="Hauser L."/>
            <person name="Kyrpides N."/>
            <person name="Mikhailova N."/>
            <person name="Richardson P."/>
        </authorList>
    </citation>
    <scope>NUCLEOTIDE SEQUENCE [LARGE SCALE GENOMIC DNA]</scope>
    <source>
        <strain>BNC1</strain>
    </source>
</reference>